<evidence type="ECO:0000255" key="1">
    <source>
        <dbReference type="HAMAP-Rule" id="MF_01722"/>
    </source>
</evidence>
<protein>
    <recommendedName>
        <fullName evidence="1">Xylose import ATP-binding protein XylG</fullName>
        <ecNumber evidence="1">7.5.2.10</ecNumber>
    </recommendedName>
</protein>
<feature type="chain" id="PRO_0000271509" description="Xylose import ATP-binding protein XylG">
    <location>
        <begin position="1"/>
        <end position="518"/>
    </location>
</feature>
<feature type="domain" description="ABC transporter 1" evidence="1">
    <location>
        <begin position="6"/>
        <end position="245"/>
    </location>
</feature>
<feature type="domain" description="ABC transporter 2" evidence="1">
    <location>
        <begin position="262"/>
        <end position="507"/>
    </location>
</feature>
<feature type="binding site" evidence="1">
    <location>
        <begin position="38"/>
        <end position="45"/>
    </location>
    <ligand>
        <name>ATP</name>
        <dbReference type="ChEBI" id="CHEBI:30616"/>
    </ligand>
</feature>
<keyword id="KW-0067">ATP-binding</keyword>
<keyword id="KW-0997">Cell inner membrane</keyword>
<keyword id="KW-1003">Cell membrane</keyword>
<keyword id="KW-0472">Membrane</keyword>
<keyword id="KW-0547">Nucleotide-binding</keyword>
<keyword id="KW-0677">Repeat</keyword>
<keyword id="KW-0762">Sugar transport</keyword>
<keyword id="KW-1278">Translocase</keyword>
<keyword id="KW-0813">Transport</keyword>
<name>XYLG_PSEPF</name>
<gene>
    <name evidence="1" type="primary">xylG</name>
    <name type="ordered locus">Pfl01_2301</name>
</gene>
<proteinExistence type="inferred from homology"/>
<sequence length="518" mass="56354">MSDYLLQMNGIVKTFGGVKALNGIDLKVRPGECVGLCGENGAGKSTLMKILSAVYPHGTWDGEILWDGQPLKAQSISETEAAGIVIIHQELTLVPDLSVAENIFMGHELTLPGGRMNYPAMIHRAEALMRELKVPDMNVSLPVSQYGGGYQQLVEIAKALNKQARLLILDEPSSALTRSEIEVLLDIIRDLKAKGVACVYISHKLDEVAAVCDTISVIRDGQHIATTAMENMDIPQIITQMVGREMSSLYPTEPHDIGEVIFEARHITCYDVDNPKRKRVDDVSFSLRRGEILGIAGLVGAGRTELVTALFGAYPGRHEGEVWLDGHPIDTRTPLKSIRAGVCLVPEDRKRQGIIPDLGVGQNITLAVLDSFSKLTRIDAEAELGSIDREISRLHLKTASPFLPITSLSGGNQQKAVLAKMLLTRPRVLILDEPTRGVDVGAKYEIYKLMGMLAAEGVSIIMVSSELAEVLGVSDRVLVIGEGRLQGDFVNHELTQEQVLAAALSQPDSHNNKDRKSA</sequence>
<organism>
    <name type="scientific">Pseudomonas fluorescens (strain Pf0-1)</name>
    <dbReference type="NCBI Taxonomy" id="205922"/>
    <lineage>
        <taxon>Bacteria</taxon>
        <taxon>Pseudomonadati</taxon>
        <taxon>Pseudomonadota</taxon>
        <taxon>Gammaproteobacteria</taxon>
        <taxon>Pseudomonadales</taxon>
        <taxon>Pseudomonadaceae</taxon>
        <taxon>Pseudomonas</taxon>
    </lineage>
</organism>
<reference key="1">
    <citation type="journal article" date="2009" name="Genome Biol.">
        <title>Genomic and genetic analyses of diversity and plant interactions of Pseudomonas fluorescens.</title>
        <authorList>
            <person name="Silby M.W."/>
            <person name="Cerdeno-Tarraga A.M."/>
            <person name="Vernikos G.S."/>
            <person name="Giddens S.R."/>
            <person name="Jackson R.W."/>
            <person name="Preston G.M."/>
            <person name="Zhang X.-X."/>
            <person name="Moon C.D."/>
            <person name="Gehrig S.M."/>
            <person name="Godfrey S.A.C."/>
            <person name="Knight C.G."/>
            <person name="Malone J.G."/>
            <person name="Robinson Z."/>
            <person name="Spiers A.J."/>
            <person name="Harris S."/>
            <person name="Challis G.L."/>
            <person name="Yaxley A.M."/>
            <person name="Harris D."/>
            <person name="Seeger K."/>
            <person name="Murphy L."/>
            <person name="Rutter S."/>
            <person name="Squares R."/>
            <person name="Quail M.A."/>
            <person name="Saunders E."/>
            <person name="Mavromatis K."/>
            <person name="Brettin T.S."/>
            <person name="Bentley S.D."/>
            <person name="Hothersall J."/>
            <person name="Stephens E."/>
            <person name="Thomas C.M."/>
            <person name="Parkhill J."/>
            <person name="Levy S.B."/>
            <person name="Rainey P.B."/>
            <person name="Thomson N.R."/>
        </authorList>
    </citation>
    <scope>NUCLEOTIDE SEQUENCE [LARGE SCALE GENOMIC DNA]</scope>
    <source>
        <strain>Pf0-1</strain>
    </source>
</reference>
<comment type="function">
    <text evidence="1">Part of the ABC transporter complex XylFGH involved in xylose import. Responsible for energy coupling to the transport system.</text>
</comment>
<comment type="catalytic activity">
    <reaction evidence="1">
        <text>D-xylose(out) + ATP + H2O = D-xylose(in) + ADP + phosphate + H(+)</text>
        <dbReference type="Rhea" id="RHEA:29899"/>
        <dbReference type="ChEBI" id="CHEBI:15377"/>
        <dbReference type="ChEBI" id="CHEBI:15378"/>
        <dbReference type="ChEBI" id="CHEBI:30616"/>
        <dbReference type="ChEBI" id="CHEBI:43474"/>
        <dbReference type="ChEBI" id="CHEBI:53455"/>
        <dbReference type="ChEBI" id="CHEBI:456216"/>
        <dbReference type="EC" id="7.5.2.10"/>
    </reaction>
</comment>
<comment type="subunit">
    <text evidence="1">The complex is composed of two ATP-binding proteins (XylG), two transmembrane proteins (XylH) and a solute-binding protein (XylF).</text>
</comment>
<comment type="subcellular location">
    <subcellularLocation>
        <location evidence="1">Cell inner membrane</location>
        <topology evidence="1">Peripheral membrane protein</topology>
    </subcellularLocation>
</comment>
<comment type="similarity">
    <text evidence="1">Belongs to the ABC transporter superfamily. Xylose importer (TC 3.A.1.2.4) family.</text>
</comment>
<dbReference type="EC" id="7.5.2.10" evidence="1"/>
<dbReference type="EMBL" id="CP000094">
    <property type="protein sequence ID" value="ABA74044.1"/>
    <property type="molecule type" value="Genomic_DNA"/>
</dbReference>
<dbReference type="RefSeq" id="WP_011333727.1">
    <property type="nucleotide sequence ID" value="NC_007492.2"/>
</dbReference>
<dbReference type="SMR" id="Q3KDW2"/>
<dbReference type="KEGG" id="pfo:Pfl01_2301"/>
<dbReference type="eggNOG" id="COG1129">
    <property type="taxonomic scope" value="Bacteria"/>
</dbReference>
<dbReference type="HOGENOM" id="CLU_000604_92_3_6"/>
<dbReference type="Proteomes" id="UP000002704">
    <property type="component" value="Chromosome"/>
</dbReference>
<dbReference type="GO" id="GO:0005886">
    <property type="term" value="C:plasma membrane"/>
    <property type="evidence" value="ECO:0007669"/>
    <property type="project" value="UniProtKB-SubCell"/>
</dbReference>
<dbReference type="GO" id="GO:0015614">
    <property type="term" value="F:ABC-type D-xylose transporter activity"/>
    <property type="evidence" value="ECO:0007669"/>
    <property type="project" value="UniProtKB-EC"/>
</dbReference>
<dbReference type="GO" id="GO:0005524">
    <property type="term" value="F:ATP binding"/>
    <property type="evidence" value="ECO:0007669"/>
    <property type="project" value="UniProtKB-KW"/>
</dbReference>
<dbReference type="GO" id="GO:0016887">
    <property type="term" value="F:ATP hydrolysis activity"/>
    <property type="evidence" value="ECO:0007669"/>
    <property type="project" value="InterPro"/>
</dbReference>
<dbReference type="CDD" id="cd03216">
    <property type="entry name" value="ABC_Carb_Monos_I"/>
    <property type="match status" value="1"/>
</dbReference>
<dbReference type="CDD" id="cd03215">
    <property type="entry name" value="ABC_Carb_Monos_II"/>
    <property type="match status" value="1"/>
</dbReference>
<dbReference type="FunFam" id="3.40.50.300:FF:000127">
    <property type="entry name" value="Ribose import ATP-binding protein RbsA"/>
    <property type="match status" value="1"/>
</dbReference>
<dbReference type="Gene3D" id="3.40.50.300">
    <property type="entry name" value="P-loop containing nucleotide triphosphate hydrolases"/>
    <property type="match status" value="2"/>
</dbReference>
<dbReference type="InterPro" id="IPR003593">
    <property type="entry name" value="AAA+_ATPase"/>
</dbReference>
<dbReference type="InterPro" id="IPR050107">
    <property type="entry name" value="ABC_carbohydrate_import_ATPase"/>
</dbReference>
<dbReference type="InterPro" id="IPR003439">
    <property type="entry name" value="ABC_transporter-like_ATP-bd"/>
</dbReference>
<dbReference type="InterPro" id="IPR017871">
    <property type="entry name" value="ABC_transporter-like_CS"/>
</dbReference>
<dbReference type="InterPro" id="IPR013455">
    <property type="entry name" value="ABC_transptr_XylG"/>
</dbReference>
<dbReference type="InterPro" id="IPR027417">
    <property type="entry name" value="P-loop_NTPase"/>
</dbReference>
<dbReference type="NCBIfam" id="NF010069">
    <property type="entry name" value="PRK13549.1"/>
    <property type="match status" value="1"/>
</dbReference>
<dbReference type="NCBIfam" id="TIGR02633">
    <property type="entry name" value="xylG"/>
    <property type="match status" value="1"/>
</dbReference>
<dbReference type="PANTHER" id="PTHR43790">
    <property type="entry name" value="CARBOHYDRATE TRANSPORT ATP-BINDING PROTEIN MG119-RELATED"/>
    <property type="match status" value="1"/>
</dbReference>
<dbReference type="PANTHER" id="PTHR43790:SF1">
    <property type="entry name" value="XYLOSE IMPORT ATP-BINDING PROTEIN XYLG"/>
    <property type="match status" value="1"/>
</dbReference>
<dbReference type="Pfam" id="PF00005">
    <property type="entry name" value="ABC_tran"/>
    <property type="match status" value="2"/>
</dbReference>
<dbReference type="SMART" id="SM00382">
    <property type="entry name" value="AAA"/>
    <property type="match status" value="2"/>
</dbReference>
<dbReference type="SUPFAM" id="SSF52540">
    <property type="entry name" value="P-loop containing nucleoside triphosphate hydrolases"/>
    <property type="match status" value="2"/>
</dbReference>
<dbReference type="PROSITE" id="PS00211">
    <property type="entry name" value="ABC_TRANSPORTER_1"/>
    <property type="match status" value="1"/>
</dbReference>
<dbReference type="PROSITE" id="PS50893">
    <property type="entry name" value="ABC_TRANSPORTER_2"/>
    <property type="match status" value="2"/>
</dbReference>
<dbReference type="PROSITE" id="PS51280">
    <property type="entry name" value="XYLG"/>
    <property type="match status" value="1"/>
</dbReference>
<accession>Q3KDW2</accession>